<sequence length="145" mass="16346">MEITKEIFSLIAAVMLLLGSFIALISAIGIVKFQDVFLRSHAATKSSTLSVLLTLIGVLIYFIVNTGFFSVRLLLSLVFINLTSPVGMHLVARAAYRNGAYMYRKNDDHTHASILLSSNEQNSTEALQLRAKKREEHRKKWYQND</sequence>
<organism>
    <name type="scientific">Staphylococcus aureus (strain bovine RF122 / ET3-1)</name>
    <dbReference type="NCBI Taxonomy" id="273036"/>
    <lineage>
        <taxon>Bacteria</taxon>
        <taxon>Bacillati</taxon>
        <taxon>Bacillota</taxon>
        <taxon>Bacilli</taxon>
        <taxon>Bacillales</taxon>
        <taxon>Staphylococcaceae</taxon>
        <taxon>Staphylococcus</taxon>
    </lineage>
</organism>
<comment type="subunit">
    <text evidence="1">May form a heterooligomeric complex that consists of seven subunits: mnhA2, mnhB2, mnhC2, mnhD2, mnhE2, mnhF2 and mnhG2.</text>
</comment>
<comment type="subcellular location">
    <subcellularLocation>
        <location evidence="3">Cell membrane</location>
        <topology evidence="3">Multi-pass membrane protein</topology>
    </subcellularLocation>
</comment>
<comment type="similarity">
    <text evidence="3">Belongs to the CPA3 antiporters (TC 2.A.63) subunit G family.</text>
</comment>
<gene>
    <name type="primary">mnhG2</name>
    <name type="synonym">mrpG2</name>
    <name type="ordered locus">SAB0579</name>
</gene>
<feature type="chain" id="PRO_0000372174" description="Putative antiporter subunit mnhG2">
    <location>
        <begin position="1"/>
        <end position="145"/>
    </location>
</feature>
<feature type="transmembrane region" description="Helical" evidence="2">
    <location>
        <begin position="11"/>
        <end position="31"/>
    </location>
</feature>
<feature type="transmembrane region" description="Helical" evidence="2">
    <location>
        <begin position="51"/>
        <end position="71"/>
    </location>
</feature>
<feature type="transmembrane region" description="Helical" evidence="2">
    <location>
        <begin position="72"/>
        <end position="92"/>
    </location>
</feature>
<keyword id="KW-0050">Antiport</keyword>
<keyword id="KW-1003">Cell membrane</keyword>
<keyword id="KW-0406">Ion transport</keyword>
<keyword id="KW-0472">Membrane</keyword>
<keyword id="KW-0812">Transmembrane</keyword>
<keyword id="KW-1133">Transmembrane helix</keyword>
<keyword id="KW-0813">Transport</keyword>
<accession>Q2YSV1</accession>
<proteinExistence type="inferred from homology"/>
<name>MNHG2_STAAB</name>
<dbReference type="EMBL" id="AJ938182">
    <property type="protein sequence ID" value="CAI80267.1"/>
    <property type="molecule type" value="Genomic_DNA"/>
</dbReference>
<dbReference type="RefSeq" id="WP_000406615.1">
    <property type="nucleotide sequence ID" value="NC_007622.1"/>
</dbReference>
<dbReference type="SMR" id="Q2YSV1"/>
<dbReference type="KEGG" id="sab:SAB0579"/>
<dbReference type="HOGENOM" id="CLU_121334_0_3_9"/>
<dbReference type="GO" id="GO:0005886">
    <property type="term" value="C:plasma membrane"/>
    <property type="evidence" value="ECO:0007669"/>
    <property type="project" value="UniProtKB-SubCell"/>
</dbReference>
<dbReference type="GO" id="GO:0015385">
    <property type="term" value="F:sodium:proton antiporter activity"/>
    <property type="evidence" value="ECO:0007669"/>
    <property type="project" value="TreeGrafter"/>
</dbReference>
<dbReference type="InterPro" id="IPR005133">
    <property type="entry name" value="PhaG_MnhG_YufB"/>
</dbReference>
<dbReference type="NCBIfam" id="TIGR01300">
    <property type="entry name" value="CPA3_mnhG_phaG"/>
    <property type="match status" value="1"/>
</dbReference>
<dbReference type="NCBIfam" id="NF009236">
    <property type="entry name" value="PRK12586.1"/>
    <property type="match status" value="1"/>
</dbReference>
<dbReference type="NCBIfam" id="NF009314">
    <property type="entry name" value="PRK12674.1-2"/>
    <property type="match status" value="1"/>
</dbReference>
<dbReference type="PANTHER" id="PTHR34703">
    <property type="entry name" value="ANTIPORTER SUBUNIT MNHG2-RELATED"/>
    <property type="match status" value="1"/>
</dbReference>
<dbReference type="PANTHER" id="PTHR34703:SF1">
    <property type="entry name" value="ANTIPORTER SUBUNIT MNHG2-RELATED"/>
    <property type="match status" value="1"/>
</dbReference>
<dbReference type="Pfam" id="PF03334">
    <property type="entry name" value="PhaG_MnhG_YufB"/>
    <property type="match status" value="1"/>
</dbReference>
<reference key="1">
    <citation type="journal article" date="2007" name="PLoS ONE">
        <title>Molecular correlates of host specialization in Staphylococcus aureus.</title>
        <authorList>
            <person name="Herron-Olson L."/>
            <person name="Fitzgerald J.R."/>
            <person name="Musser J.M."/>
            <person name="Kapur V."/>
        </authorList>
    </citation>
    <scope>NUCLEOTIDE SEQUENCE [LARGE SCALE GENOMIC DNA]</scope>
    <source>
        <strain>bovine RF122 / ET3-1</strain>
    </source>
</reference>
<evidence type="ECO:0000250" key="1"/>
<evidence type="ECO:0000255" key="2"/>
<evidence type="ECO:0000305" key="3"/>
<protein>
    <recommendedName>
        <fullName>Putative antiporter subunit mnhG2</fullName>
    </recommendedName>
    <alternativeName>
        <fullName>Mrp complex subunit G2</fullName>
    </alternativeName>
    <alternativeName>
        <fullName>Putative NADH-ubiquinone oxidoreductase subunit mnhF2</fullName>
    </alternativeName>
</protein>